<dbReference type="EC" id="7.1.2.2" evidence="1"/>
<dbReference type="EMBL" id="AP006840">
    <property type="protein sequence ID" value="BAD39076.1"/>
    <property type="molecule type" value="Genomic_DNA"/>
</dbReference>
<dbReference type="RefSeq" id="WP_011194226.1">
    <property type="nucleotide sequence ID" value="NC_006177.1"/>
</dbReference>
<dbReference type="SMR" id="Q67TB7"/>
<dbReference type="STRING" id="292459.STH91"/>
<dbReference type="KEGG" id="sth:STH91"/>
<dbReference type="eggNOG" id="COG0055">
    <property type="taxonomic scope" value="Bacteria"/>
</dbReference>
<dbReference type="HOGENOM" id="CLU_022398_0_2_9"/>
<dbReference type="OrthoDB" id="9801639at2"/>
<dbReference type="Proteomes" id="UP000000417">
    <property type="component" value="Chromosome"/>
</dbReference>
<dbReference type="GO" id="GO:0005886">
    <property type="term" value="C:plasma membrane"/>
    <property type="evidence" value="ECO:0007669"/>
    <property type="project" value="UniProtKB-SubCell"/>
</dbReference>
<dbReference type="GO" id="GO:0045259">
    <property type="term" value="C:proton-transporting ATP synthase complex"/>
    <property type="evidence" value="ECO:0007669"/>
    <property type="project" value="UniProtKB-KW"/>
</dbReference>
<dbReference type="GO" id="GO:0005524">
    <property type="term" value="F:ATP binding"/>
    <property type="evidence" value="ECO:0007669"/>
    <property type="project" value="UniProtKB-UniRule"/>
</dbReference>
<dbReference type="GO" id="GO:0016887">
    <property type="term" value="F:ATP hydrolysis activity"/>
    <property type="evidence" value="ECO:0007669"/>
    <property type="project" value="InterPro"/>
</dbReference>
<dbReference type="GO" id="GO:0046933">
    <property type="term" value="F:proton-transporting ATP synthase activity, rotational mechanism"/>
    <property type="evidence" value="ECO:0007669"/>
    <property type="project" value="UniProtKB-UniRule"/>
</dbReference>
<dbReference type="CDD" id="cd18110">
    <property type="entry name" value="ATP-synt_F1_beta_C"/>
    <property type="match status" value="1"/>
</dbReference>
<dbReference type="CDD" id="cd18115">
    <property type="entry name" value="ATP-synt_F1_beta_N"/>
    <property type="match status" value="1"/>
</dbReference>
<dbReference type="CDD" id="cd01133">
    <property type="entry name" value="F1-ATPase_beta_CD"/>
    <property type="match status" value="1"/>
</dbReference>
<dbReference type="FunFam" id="1.10.1140.10:FF:000001">
    <property type="entry name" value="ATP synthase subunit beta"/>
    <property type="match status" value="1"/>
</dbReference>
<dbReference type="FunFam" id="3.40.50.300:FF:000004">
    <property type="entry name" value="ATP synthase subunit beta"/>
    <property type="match status" value="1"/>
</dbReference>
<dbReference type="Gene3D" id="2.40.10.170">
    <property type="match status" value="1"/>
</dbReference>
<dbReference type="Gene3D" id="1.10.1140.10">
    <property type="entry name" value="Bovine Mitochondrial F1-atpase, Atp Synthase Beta Chain, Chain D, domain 3"/>
    <property type="match status" value="1"/>
</dbReference>
<dbReference type="Gene3D" id="3.40.50.300">
    <property type="entry name" value="P-loop containing nucleotide triphosphate hydrolases"/>
    <property type="match status" value="1"/>
</dbReference>
<dbReference type="HAMAP" id="MF_01347">
    <property type="entry name" value="ATP_synth_beta_bact"/>
    <property type="match status" value="1"/>
</dbReference>
<dbReference type="InterPro" id="IPR003593">
    <property type="entry name" value="AAA+_ATPase"/>
</dbReference>
<dbReference type="InterPro" id="IPR055190">
    <property type="entry name" value="ATP-synt_VA_C"/>
</dbReference>
<dbReference type="InterPro" id="IPR005722">
    <property type="entry name" value="ATP_synth_F1_bsu"/>
</dbReference>
<dbReference type="InterPro" id="IPR020003">
    <property type="entry name" value="ATPase_a/bsu_AS"/>
</dbReference>
<dbReference type="InterPro" id="IPR050053">
    <property type="entry name" value="ATPase_alpha/beta_chains"/>
</dbReference>
<dbReference type="InterPro" id="IPR004100">
    <property type="entry name" value="ATPase_F1/V1/A1_a/bsu_N"/>
</dbReference>
<dbReference type="InterPro" id="IPR036121">
    <property type="entry name" value="ATPase_F1/V1/A1_a/bsu_N_sf"/>
</dbReference>
<dbReference type="InterPro" id="IPR000194">
    <property type="entry name" value="ATPase_F1/V1/A1_a/bsu_nucl-bd"/>
</dbReference>
<dbReference type="InterPro" id="IPR024034">
    <property type="entry name" value="ATPase_F1/V1_b/a_C"/>
</dbReference>
<dbReference type="InterPro" id="IPR027417">
    <property type="entry name" value="P-loop_NTPase"/>
</dbReference>
<dbReference type="NCBIfam" id="TIGR01039">
    <property type="entry name" value="atpD"/>
    <property type="match status" value="1"/>
</dbReference>
<dbReference type="PANTHER" id="PTHR15184">
    <property type="entry name" value="ATP SYNTHASE"/>
    <property type="match status" value="1"/>
</dbReference>
<dbReference type="PANTHER" id="PTHR15184:SF71">
    <property type="entry name" value="ATP SYNTHASE SUBUNIT BETA, MITOCHONDRIAL"/>
    <property type="match status" value="1"/>
</dbReference>
<dbReference type="Pfam" id="PF00006">
    <property type="entry name" value="ATP-synt_ab"/>
    <property type="match status" value="1"/>
</dbReference>
<dbReference type="Pfam" id="PF02874">
    <property type="entry name" value="ATP-synt_ab_N"/>
    <property type="match status" value="1"/>
</dbReference>
<dbReference type="Pfam" id="PF22919">
    <property type="entry name" value="ATP-synt_VA_C"/>
    <property type="match status" value="1"/>
</dbReference>
<dbReference type="SMART" id="SM00382">
    <property type="entry name" value="AAA"/>
    <property type="match status" value="1"/>
</dbReference>
<dbReference type="SUPFAM" id="SSF47917">
    <property type="entry name" value="C-terminal domain of alpha and beta subunits of F1 ATP synthase"/>
    <property type="match status" value="1"/>
</dbReference>
<dbReference type="SUPFAM" id="SSF50615">
    <property type="entry name" value="N-terminal domain of alpha and beta subunits of F1 ATP synthase"/>
    <property type="match status" value="1"/>
</dbReference>
<dbReference type="SUPFAM" id="SSF52540">
    <property type="entry name" value="P-loop containing nucleoside triphosphate hydrolases"/>
    <property type="match status" value="1"/>
</dbReference>
<dbReference type="PROSITE" id="PS00152">
    <property type="entry name" value="ATPASE_ALPHA_BETA"/>
    <property type="match status" value="1"/>
</dbReference>
<proteinExistence type="inferred from homology"/>
<protein>
    <recommendedName>
        <fullName evidence="1">ATP synthase subunit beta</fullName>
        <ecNumber evidence="1">7.1.2.2</ecNumber>
    </recommendedName>
    <alternativeName>
        <fullName evidence="1">ATP synthase F1 sector subunit beta</fullName>
    </alternativeName>
    <alternativeName>
        <fullName evidence="1">F-ATPase subunit beta</fullName>
    </alternativeName>
</protein>
<accession>Q67TB7</accession>
<name>ATPB_SYMTH</name>
<gene>
    <name evidence="1" type="primary">atpD</name>
    <name type="ordered locus">STH91</name>
</gene>
<reference key="1">
    <citation type="journal article" date="2004" name="Nucleic Acids Res.">
        <title>Genome sequence of Symbiobacterium thermophilum, an uncultivable bacterium that depends on microbial commensalism.</title>
        <authorList>
            <person name="Ueda K."/>
            <person name="Yamashita A."/>
            <person name="Ishikawa J."/>
            <person name="Shimada M."/>
            <person name="Watsuji T."/>
            <person name="Morimura K."/>
            <person name="Ikeda H."/>
            <person name="Hattori M."/>
            <person name="Beppu T."/>
        </authorList>
    </citation>
    <scope>NUCLEOTIDE SEQUENCE [LARGE SCALE GENOMIC DNA]</scope>
    <source>
        <strain>DSM 24528 / JCM 14929 / IAM 14863 / T</strain>
    </source>
</reference>
<evidence type="ECO:0000255" key="1">
    <source>
        <dbReference type="HAMAP-Rule" id="MF_01347"/>
    </source>
</evidence>
<feature type="chain" id="PRO_0000254403" description="ATP synthase subunit beta">
    <location>
        <begin position="1"/>
        <end position="472"/>
    </location>
</feature>
<feature type="binding site" evidence="1">
    <location>
        <begin position="156"/>
        <end position="163"/>
    </location>
    <ligand>
        <name>ATP</name>
        <dbReference type="ChEBI" id="CHEBI:30616"/>
    </ligand>
</feature>
<sequence length="472" mass="51358">MSEPTGKILAIMGAVVDVEFPDGHLPKLNHALVIRNGGERGDINLTLEVAQHLGNNQVRCIAMDSTDGLRRGETVYDTQAPITVPVGEPVLGRIFNVLGETIDGKGPVNSPVSLPIHREPPGVANVDPATEMLPTGIKVIDLLCPYARGGKIGLFGGAGVGKTVMIQELIHNIAYKFGGYSIFAGVGERTREGNDLYHEMIEAGVIDKVAMVFGQMNEPPGARMRVALTGLTMAEYFRDEQGLDVLLFIDNIFRFTQAGSEVSALLGRMPSAVGYQPTLATEMGYLQERITSTKKGSITSVQAIYVPADDLTDPAPATTFAHLDATTVLSRAVFEKAIFPAVDPLDSTSRILDPNIVGREHYEVARGVQKVLQRYKELQDIIAILGMDELSDEDKLIVARARKIERFLSQPMFVAEKFTNLPGVFVDPKDTVKGFKEILEGKHDDLPEQAFYMVGTIEQAVEKGKKLLAEVS</sequence>
<keyword id="KW-0066">ATP synthesis</keyword>
<keyword id="KW-0067">ATP-binding</keyword>
<keyword id="KW-1003">Cell membrane</keyword>
<keyword id="KW-0139">CF(1)</keyword>
<keyword id="KW-0375">Hydrogen ion transport</keyword>
<keyword id="KW-0406">Ion transport</keyword>
<keyword id="KW-0472">Membrane</keyword>
<keyword id="KW-0547">Nucleotide-binding</keyword>
<keyword id="KW-1185">Reference proteome</keyword>
<keyword id="KW-1278">Translocase</keyword>
<keyword id="KW-0813">Transport</keyword>
<comment type="function">
    <text evidence="1">Produces ATP from ADP in the presence of a proton gradient across the membrane. The catalytic sites are hosted primarily by the beta subunits.</text>
</comment>
<comment type="catalytic activity">
    <reaction evidence="1">
        <text>ATP + H2O + 4 H(+)(in) = ADP + phosphate + 5 H(+)(out)</text>
        <dbReference type="Rhea" id="RHEA:57720"/>
        <dbReference type="ChEBI" id="CHEBI:15377"/>
        <dbReference type="ChEBI" id="CHEBI:15378"/>
        <dbReference type="ChEBI" id="CHEBI:30616"/>
        <dbReference type="ChEBI" id="CHEBI:43474"/>
        <dbReference type="ChEBI" id="CHEBI:456216"/>
        <dbReference type="EC" id="7.1.2.2"/>
    </reaction>
</comment>
<comment type="subunit">
    <text evidence="1">F-type ATPases have 2 components, CF(1) - the catalytic core - and CF(0) - the membrane proton channel. CF(1) has five subunits: alpha(3), beta(3), gamma(1), delta(1), epsilon(1). CF(0) has three main subunits: a(1), b(2) and c(9-12). The alpha and beta chains form an alternating ring which encloses part of the gamma chain. CF(1) is attached to CF(0) by a central stalk formed by the gamma and epsilon chains, while a peripheral stalk is formed by the delta and b chains.</text>
</comment>
<comment type="subcellular location">
    <subcellularLocation>
        <location evidence="1">Cell membrane</location>
        <topology evidence="1">Peripheral membrane protein</topology>
    </subcellularLocation>
</comment>
<comment type="similarity">
    <text evidence="1">Belongs to the ATPase alpha/beta chains family.</text>
</comment>
<organism>
    <name type="scientific">Symbiobacterium thermophilum (strain DSM 24528 / JCM 14929 / IAM 14863 / T)</name>
    <dbReference type="NCBI Taxonomy" id="292459"/>
    <lineage>
        <taxon>Bacteria</taxon>
        <taxon>Bacillati</taxon>
        <taxon>Bacillota</taxon>
        <taxon>Clostridia</taxon>
        <taxon>Eubacteriales</taxon>
        <taxon>Symbiobacteriaceae</taxon>
        <taxon>Symbiobacterium</taxon>
    </lineage>
</organism>